<sequence length="525" mass="59775">MRIFRFVKIVFTVIRFGLDEVMLSRIENPRVKLLLRITTIGRRFADPPAVRLRRALESLGPIFVKFGQVLSTRRDLLPVDFANELAKLQDQVPPFDSAVAIAIVEKSLGARIDVLFDEFERVPVASASIAQVHFAKLKQGEHKGKAVAVKVLRPNMLPVIDSDLALMRDIATWAERLWADGRRLKPREVVAEFDKYLHDELDLMREAANGSQLRRNFAGLDLLLVPEMFWDYSTPAVLVMERMTGVPISQVDTLRAAGVDIPKLAREGVEIFFTQVFRDGFFHADMHPGNIQVSLDPKHFGRYIALDFGIVGALSDFDKNYLAQNFLAFFKRDYHRVATLHLESGWVPPDTRVEELESAIRAVCEPYFDRALKDISLGQVLMRLFSTSRRFNVEIQPQLVLLQKTMLNVEGLGRSLDPELDLWKTAKPYLERWMTEQIGLRGWYERFKVEAPQWSKTLPQLPRLVHQALISHHEAPRAISDDLIRQILVEQRRTNRLLQALLVFGLAVGAGAVIARVLIVLAYGG</sequence>
<feature type="chain" id="PRO_0000200701" description="Probable protein kinase UbiB">
    <location>
        <begin position="1"/>
        <end position="525"/>
    </location>
</feature>
<feature type="transmembrane region" description="Helical" evidence="1">
    <location>
        <begin position="501"/>
        <end position="521"/>
    </location>
</feature>
<feature type="domain" description="Protein kinase" evidence="1">
    <location>
        <begin position="118"/>
        <end position="500"/>
    </location>
</feature>
<feature type="active site" description="Proton acceptor" evidence="1">
    <location>
        <position position="285"/>
    </location>
</feature>
<feature type="binding site" evidence="1">
    <location>
        <begin position="124"/>
        <end position="132"/>
    </location>
    <ligand>
        <name>ATP</name>
        <dbReference type="ChEBI" id="CHEBI:30616"/>
    </ligand>
</feature>
<feature type="binding site" evidence="1">
    <location>
        <position position="150"/>
    </location>
    <ligand>
        <name>ATP</name>
        <dbReference type="ChEBI" id="CHEBI:30616"/>
    </ligand>
</feature>
<accession>Q63X97</accession>
<organism>
    <name type="scientific">Burkholderia pseudomallei (strain K96243)</name>
    <dbReference type="NCBI Taxonomy" id="272560"/>
    <lineage>
        <taxon>Bacteria</taxon>
        <taxon>Pseudomonadati</taxon>
        <taxon>Pseudomonadota</taxon>
        <taxon>Betaproteobacteria</taxon>
        <taxon>Burkholderiales</taxon>
        <taxon>Burkholderiaceae</taxon>
        <taxon>Burkholderia</taxon>
        <taxon>pseudomallei group</taxon>
    </lineage>
</organism>
<name>UBIB_BURPS</name>
<keyword id="KW-0067">ATP-binding</keyword>
<keyword id="KW-0997">Cell inner membrane</keyword>
<keyword id="KW-1003">Cell membrane</keyword>
<keyword id="KW-0418">Kinase</keyword>
<keyword id="KW-0472">Membrane</keyword>
<keyword id="KW-0547">Nucleotide-binding</keyword>
<keyword id="KW-1185">Reference proteome</keyword>
<keyword id="KW-0808">Transferase</keyword>
<keyword id="KW-0812">Transmembrane</keyword>
<keyword id="KW-1133">Transmembrane helix</keyword>
<keyword id="KW-0831">Ubiquinone biosynthesis</keyword>
<dbReference type="EC" id="2.7.-.-" evidence="1"/>
<dbReference type="EMBL" id="BX571965">
    <property type="protein sequence ID" value="CAH34633.1"/>
    <property type="molecule type" value="Genomic_DNA"/>
</dbReference>
<dbReference type="RefSeq" id="WP_004189815.1">
    <property type="nucleotide sequence ID" value="NZ_CP009538.1"/>
</dbReference>
<dbReference type="RefSeq" id="YP_107269.1">
    <property type="nucleotide sequence ID" value="NC_006350.1"/>
</dbReference>
<dbReference type="SMR" id="Q63X97"/>
<dbReference type="STRING" id="272560.BPSL0640"/>
<dbReference type="GeneID" id="93059152"/>
<dbReference type="KEGG" id="bps:BPSL0640"/>
<dbReference type="PATRIC" id="fig|272560.51.peg.983"/>
<dbReference type="eggNOG" id="COG0661">
    <property type="taxonomic scope" value="Bacteria"/>
</dbReference>
<dbReference type="UniPathway" id="UPA00232"/>
<dbReference type="Proteomes" id="UP000000605">
    <property type="component" value="Chromosome 1"/>
</dbReference>
<dbReference type="GO" id="GO:0005886">
    <property type="term" value="C:plasma membrane"/>
    <property type="evidence" value="ECO:0007669"/>
    <property type="project" value="UniProtKB-SubCell"/>
</dbReference>
<dbReference type="GO" id="GO:0005524">
    <property type="term" value="F:ATP binding"/>
    <property type="evidence" value="ECO:0007669"/>
    <property type="project" value="UniProtKB-KW"/>
</dbReference>
<dbReference type="GO" id="GO:0004672">
    <property type="term" value="F:protein kinase activity"/>
    <property type="evidence" value="ECO:0007669"/>
    <property type="project" value="UniProtKB-UniRule"/>
</dbReference>
<dbReference type="GO" id="GO:0010795">
    <property type="term" value="P:regulation of ubiquinone biosynthetic process"/>
    <property type="evidence" value="ECO:0007669"/>
    <property type="project" value="UniProtKB-UniRule"/>
</dbReference>
<dbReference type="GO" id="GO:0006744">
    <property type="term" value="P:ubiquinone biosynthetic process"/>
    <property type="evidence" value="ECO:0007669"/>
    <property type="project" value="UniProtKB-UniPathway"/>
</dbReference>
<dbReference type="CDD" id="cd13972">
    <property type="entry name" value="UbiB"/>
    <property type="match status" value="1"/>
</dbReference>
<dbReference type="HAMAP" id="MF_00414">
    <property type="entry name" value="UbiB"/>
    <property type="match status" value="1"/>
</dbReference>
<dbReference type="InterPro" id="IPR004147">
    <property type="entry name" value="ABC1_dom"/>
</dbReference>
<dbReference type="InterPro" id="IPR011009">
    <property type="entry name" value="Kinase-like_dom_sf"/>
</dbReference>
<dbReference type="InterPro" id="IPR010232">
    <property type="entry name" value="UbiB"/>
</dbReference>
<dbReference type="InterPro" id="IPR045308">
    <property type="entry name" value="UbiB_bact"/>
</dbReference>
<dbReference type="InterPro" id="IPR050154">
    <property type="entry name" value="UbiB_kinase"/>
</dbReference>
<dbReference type="NCBIfam" id="NF003404">
    <property type="entry name" value="PRK04750.1"/>
    <property type="match status" value="1"/>
</dbReference>
<dbReference type="NCBIfam" id="TIGR01982">
    <property type="entry name" value="UbiB"/>
    <property type="match status" value="1"/>
</dbReference>
<dbReference type="PANTHER" id="PTHR10566">
    <property type="entry name" value="CHAPERONE-ACTIVITY OF BC1 COMPLEX CABC1 -RELATED"/>
    <property type="match status" value="1"/>
</dbReference>
<dbReference type="PANTHER" id="PTHR10566:SF113">
    <property type="entry name" value="PROTEIN ACTIVITY OF BC1 COMPLEX KINASE 7, CHLOROPLASTIC"/>
    <property type="match status" value="1"/>
</dbReference>
<dbReference type="Pfam" id="PF03109">
    <property type="entry name" value="ABC1"/>
    <property type="match status" value="1"/>
</dbReference>
<dbReference type="SUPFAM" id="SSF56112">
    <property type="entry name" value="Protein kinase-like (PK-like)"/>
    <property type="match status" value="1"/>
</dbReference>
<reference key="1">
    <citation type="journal article" date="2004" name="Proc. Natl. Acad. Sci. U.S.A.">
        <title>Genomic plasticity of the causative agent of melioidosis, Burkholderia pseudomallei.</title>
        <authorList>
            <person name="Holden M.T.G."/>
            <person name="Titball R.W."/>
            <person name="Peacock S.J."/>
            <person name="Cerdeno-Tarraga A.-M."/>
            <person name="Atkins T."/>
            <person name="Crossman L.C."/>
            <person name="Pitt T."/>
            <person name="Churcher C."/>
            <person name="Mungall K.L."/>
            <person name="Bentley S.D."/>
            <person name="Sebaihia M."/>
            <person name="Thomson N.R."/>
            <person name="Bason N."/>
            <person name="Beacham I.R."/>
            <person name="Brooks K."/>
            <person name="Brown K.A."/>
            <person name="Brown N.F."/>
            <person name="Challis G.L."/>
            <person name="Cherevach I."/>
            <person name="Chillingworth T."/>
            <person name="Cronin A."/>
            <person name="Crossett B."/>
            <person name="Davis P."/>
            <person name="DeShazer D."/>
            <person name="Feltwell T."/>
            <person name="Fraser A."/>
            <person name="Hance Z."/>
            <person name="Hauser H."/>
            <person name="Holroyd S."/>
            <person name="Jagels K."/>
            <person name="Keith K.E."/>
            <person name="Maddison M."/>
            <person name="Moule S."/>
            <person name="Price C."/>
            <person name="Quail M.A."/>
            <person name="Rabbinowitsch E."/>
            <person name="Rutherford K."/>
            <person name="Sanders M."/>
            <person name="Simmonds M."/>
            <person name="Songsivilai S."/>
            <person name="Stevens K."/>
            <person name="Tumapa S."/>
            <person name="Vesaratchavest M."/>
            <person name="Whitehead S."/>
            <person name="Yeats C."/>
            <person name="Barrell B.G."/>
            <person name="Oyston P.C.F."/>
            <person name="Parkhill J."/>
        </authorList>
    </citation>
    <scope>NUCLEOTIDE SEQUENCE [LARGE SCALE GENOMIC DNA]</scope>
    <source>
        <strain>K96243</strain>
    </source>
</reference>
<comment type="function">
    <text evidence="1">Is probably a protein kinase regulator of UbiI activity which is involved in aerobic coenzyme Q (ubiquinone) biosynthesis.</text>
</comment>
<comment type="pathway">
    <text>Cofactor biosynthesis; ubiquinone biosynthesis [regulation].</text>
</comment>
<comment type="subcellular location">
    <subcellularLocation>
        <location evidence="1">Cell inner membrane</location>
        <topology evidence="1">Single-pass membrane protein</topology>
    </subcellularLocation>
</comment>
<comment type="similarity">
    <text evidence="1">Belongs to the ABC1 family. UbiB subfamily.</text>
</comment>
<gene>
    <name evidence="1" type="primary">ubiB</name>
    <name type="ordered locus">BPSL0640</name>
</gene>
<evidence type="ECO:0000255" key="1">
    <source>
        <dbReference type="HAMAP-Rule" id="MF_00414"/>
    </source>
</evidence>
<proteinExistence type="inferred from homology"/>
<protein>
    <recommendedName>
        <fullName evidence="1">Probable protein kinase UbiB</fullName>
        <ecNumber evidence="1">2.7.-.-</ecNumber>
    </recommendedName>
    <alternativeName>
        <fullName evidence="1">Ubiquinone biosynthesis protein UbiB</fullName>
    </alternativeName>
</protein>